<evidence type="ECO:0000250" key="1">
    <source>
        <dbReference type="UniProtKB" id="O76083"/>
    </source>
</evidence>
<evidence type="ECO:0000250" key="2">
    <source>
        <dbReference type="UniProtKB" id="Q9Y233"/>
    </source>
</evidence>
<evidence type="ECO:0000255" key="3">
    <source>
        <dbReference type="PROSITE-ProRule" id="PRU01192"/>
    </source>
</evidence>
<evidence type="ECO:0000269" key="4">
    <source>
    </source>
</evidence>
<evidence type="ECO:0000269" key="5">
    <source>
    </source>
</evidence>
<evidence type="ECO:0000269" key="6">
    <source>
    </source>
</evidence>
<evidence type="ECO:0000303" key="7">
    <source>
    </source>
</evidence>
<evidence type="ECO:0000303" key="8">
    <source>
    </source>
</evidence>
<evidence type="ECO:0000305" key="9"/>
<evidence type="ECO:0007829" key="10">
    <source>
        <dbReference type="PDB" id="3HQW"/>
    </source>
</evidence>
<evidence type="ECO:0007829" key="11">
    <source>
        <dbReference type="PDB" id="3HR1"/>
    </source>
</evidence>
<gene>
    <name type="primary">Pde10a</name>
</gene>
<accession>Q9QYJ6</accession>
<accession>Q6S9E6</accession>
<accession>Q6S9E7</accession>
<accession>Q6S9E8</accession>
<accession>Q6S9E9</accession>
<accession>Q9QYJ5</accession>
<dbReference type="EC" id="3.1.4.17" evidence="4 5"/>
<dbReference type="EMBL" id="AB027155">
    <property type="protein sequence ID" value="BAA88996.1"/>
    <property type="molecule type" value="mRNA"/>
</dbReference>
<dbReference type="EMBL" id="AB027156">
    <property type="protein sequence ID" value="BAA88997.1"/>
    <property type="molecule type" value="mRNA"/>
</dbReference>
<dbReference type="EMBL" id="AY462091">
    <property type="protein sequence ID" value="AAS21243.1"/>
    <property type="molecule type" value="mRNA"/>
</dbReference>
<dbReference type="EMBL" id="AY462092">
    <property type="protein sequence ID" value="AAS21244.1"/>
    <property type="molecule type" value="mRNA"/>
</dbReference>
<dbReference type="EMBL" id="AY462093">
    <property type="protein sequence ID" value="AAS21245.1"/>
    <property type="molecule type" value="mRNA"/>
</dbReference>
<dbReference type="EMBL" id="AY462094">
    <property type="protein sequence ID" value="AAS21246.1"/>
    <property type="molecule type" value="mRNA"/>
</dbReference>
<dbReference type="EMBL" id="AY462095">
    <property type="protein sequence ID" value="AAS21247.1"/>
    <property type="molecule type" value="mRNA"/>
</dbReference>
<dbReference type="EMBL" id="CH474059">
    <property type="protein sequence ID" value="EDL83106.1"/>
    <property type="molecule type" value="Genomic_DNA"/>
</dbReference>
<dbReference type="RefSeq" id="NP_001375438.1">
    <molecule id="Q9QYJ6-2"/>
    <property type="nucleotide sequence ID" value="NM_001388509.1"/>
</dbReference>
<dbReference type="RefSeq" id="NP_001375439.1">
    <molecule id="Q9QYJ6-2"/>
    <property type="nucleotide sequence ID" value="NM_001388510.1"/>
</dbReference>
<dbReference type="RefSeq" id="NP_001375440.1">
    <molecule id="Q9QYJ6-5"/>
    <property type="nucleotide sequence ID" value="NM_001388511.1"/>
</dbReference>
<dbReference type="RefSeq" id="NP_071572.1">
    <molecule id="Q9QYJ6-1"/>
    <property type="nucleotide sequence ID" value="NM_022236.2"/>
</dbReference>
<dbReference type="RefSeq" id="XP_038945088.1">
    <molecule id="Q9QYJ6-3"/>
    <property type="nucleotide sequence ID" value="XM_039089160.2"/>
</dbReference>
<dbReference type="RefSeq" id="XP_038945109.1">
    <molecule id="Q9QYJ6-5"/>
    <property type="nucleotide sequence ID" value="XM_039089181.2"/>
</dbReference>
<dbReference type="RefSeq" id="XP_038945112.1">
    <molecule id="Q9QYJ6-5"/>
    <property type="nucleotide sequence ID" value="XM_039089184.2"/>
</dbReference>
<dbReference type="RefSeq" id="XP_038945116.1">
    <molecule id="Q9QYJ6-5"/>
    <property type="nucleotide sequence ID" value="XM_039089188.2"/>
</dbReference>
<dbReference type="RefSeq" id="XP_038945119.1">
    <molecule id="Q9QYJ6-6"/>
    <property type="nucleotide sequence ID" value="XM_039089191.2"/>
</dbReference>
<dbReference type="RefSeq" id="XP_063128652.1">
    <molecule id="Q9QYJ6-4"/>
    <property type="nucleotide sequence ID" value="XM_063272582.1"/>
</dbReference>
<dbReference type="PDB" id="2O8H">
    <property type="method" value="X-ray"/>
    <property type="resolution" value="1.80 A"/>
    <property type="chains" value="A=452-794"/>
</dbReference>
<dbReference type="PDB" id="2OVV">
    <property type="method" value="X-ray"/>
    <property type="resolution" value="2.00 A"/>
    <property type="chains" value="A=452-794"/>
</dbReference>
<dbReference type="PDB" id="2OVY">
    <property type="method" value="X-ray"/>
    <property type="resolution" value="1.80 A"/>
    <property type="chains" value="A=452-794"/>
</dbReference>
<dbReference type="PDB" id="3HQW">
    <property type="method" value="X-ray"/>
    <property type="resolution" value="1.70 A"/>
    <property type="chains" value="A=452-794"/>
</dbReference>
<dbReference type="PDB" id="3HQY">
    <property type="method" value="X-ray"/>
    <property type="resolution" value="2.00 A"/>
    <property type="chains" value="A=452-794"/>
</dbReference>
<dbReference type="PDB" id="3HQZ">
    <property type="method" value="X-ray"/>
    <property type="resolution" value="1.70 A"/>
    <property type="chains" value="A=452-794"/>
</dbReference>
<dbReference type="PDB" id="3HR1">
    <property type="method" value="X-ray"/>
    <property type="resolution" value="1.53 A"/>
    <property type="chains" value="A=452-794"/>
</dbReference>
<dbReference type="PDB" id="3LXG">
    <property type="method" value="X-ray"/>
    <property type="resolution" value="2.30 A"/>
    <property type="chains" value="A=463-770"/>
</dbReference>
<dbReference type="PDB" id="3QPN">
    <property type="method" value="X-ray"/>
    <property type="resolution" value="2.00 A"/>
    <property type="chains" value="A=452-794"/>
</dbReference>
<dbReference type="PDB" id="3QPO">
    <property type="method" value="X-ray"/>
    <property type="resolution" value="1.80 A"/>
    <property type="chains" value="A=452-794"/>
</dbReference>
<dbReference type="PDB" id="3QPP">
    <property type="method" value="X-ray"/>
    <property type="resolution" value="1.80 A"/>
    <property type="chains" value="A=452-794"/>
</dbReference>
<dbReference type="PDB" id="6K9U">
    <property type="method" value="X-ray"/>
    <property type="resolution" value="2.35 A"/>
    <property type="chains" value="A=463-770"/>
</dbReference>
<dbReference type="PDBsum" id="2O8H"/>
<dbReference type="PDBsum" id="2OVV"/>
<dbReference type="PDBsum" id="2OVY"/>
<dbReference type="PDBsum" id="3HQW"/>
<dbReference type="PDBsum" id="3HQY"/>
<dbReference type="PDBsum" id="3HQZ"/>
<dbReference type="PDBsum" id="3HR1"/>
<dbReference type="PDBsum" id="3LXG"/>
<dbReference type="PDBsum" id="3QPN"/>
<dbReference type="PDBsum" id="3QPO"/>
<dbReference type="PDBsum" id="3QPP"/>
<dbReference type="PDBsum" id="6K9U"/>
<dbReference type="SMR" id="Q9QYJ6"/>
<dbReference type="BioGRID" id="248919">
    <property type="interactions" value="1"/>
</dbReference>
<dbReference type="FunCoup" id="Q9QYJ6">
    <property type="interactions" value="1366"/>
</dbReference>
<dbReference type="STRING" id="10116.ENSRNOP00000042134"/>
<dbReference type="BindingDB" id="Q9QYJ6"/>
<dbReference type="ChEMBL" id="CHEMBL6140"/>
<dbReference type="DrugCentral" id="Q9QYJ6"/>
<dbReference type="GuidetoPHARMACOLOGY" id="1310"/>
<dbReference type="GlyGen" id="Q9QYJ6">
    <property type="glycosylation" value="1 site"/>
</dbReference>
<dbReference type="iPTMnet" id="Q9QYJ6"/>
<dbReference type="PhosphoSitePlus" id="Q9QYJ6"/>
<dbReference type="SwissPalm" id="Q9QYJ6"/>
<dbReference type="PaxDb" id="10116-ENSRNOP00000060834"/>
<dbReference type="Ensembl" id="ENSRNOT00000043474.4">
    <molecule id="Q9QYJ6-1"/>
    <property type="protein sequence ID" value="ENSRNOP00000042134.2"/>
    <property type="gene ID" value="ENSRNOG00000011310.9"/>
</dbReference>
<dbReference type="Ensembl" id="ENSRNOT00000067142.5">
    <molecule id="Q9QYJ6-4"/>
    <property type="protein sequence ID" value="ENSRNOP00000060834.4"/>
    <property type="gene ID" value="ENSRNOG00000011310.9"/>
</dbReference>
<dbReference type="Ensembl" id="ENSRNOT00000111873.1">
    <molecule id="Q9QYJ6-3"/>
    <property type="protein sequence ID" value="ENSRNOP00000091632.1"/>
    <property type="gene ID" value="ENSRNOG00000011310.9"/>
</dbReference>
<dbReference type="GeneID" id="63885"/>
<dbReference type="KEGG" id="rno:63885"/>
<dbReference type="AGR" id="RGD:68434"/>
<dbReference type="CTD" id="10846"/>
<dbReference type="RGD" id="68434">
    <property type="gene designation" value="Pde10a"/>
</dbReference>
<dbReference type="eggNOG" id="KOG3689">
    <property type="taxonomic scope" value="Eukaryota"/>
</dbReference>
<dbReference type="GeneTree" id="ENSGT00940000156543"/>
<dbReference type="InParanoid" id="Q9QYJ6"/>
<dbReference type="OMA" id="YNAKKWE"/>
<dbReference type="TreeFam" id="TF316499"/>
<dbReference type="Reactome" id="R-RNO-418457">
    <property type="pathway name" value="cGMP effects"/>
</dbReference>
<dbReference type="Reactome" id="R-RNO-418555">
    <property type="pathway name" value="G alpha (s) signalling events"/>
</dbReference>
<dbReference type="SABIO-RK" id="Q9QYJ6"/>
<dbReference type="UniPathway" id="UPA00762">
    <property type="reaction ID" value="UER00747"/>
</dbReference>
<dbReference type="UniPathway" id="UPA00763">
    <property type="reaction ID" value="UER00748"/>
</dbReference>
<dbReference type="EvolutionaryTrace" id="Q9QYJ6"/>
<dbReference type="PRO" id="PR:Q9QYJ6"/>
<dbReference type="Proteomes" id="UP000002494">
    <property type="component" value="Chromosome 1"/>
</dbReference>
<dbReference type="Proteomes" id="UP000234681">
    <property type="component" value="Chromosome 1"/>
</dbReference>
<dbReference type="Bgee" id="ENSRNOG00000011310">
    <property type="expression patterns" value="Expressed in Ammon's horn and 15 other cell types or tissues"/>
</dbReference>
<dbReference type="ExpressionAtlas" id="Q9QYJ6">
    <property type="expression patterns" value="baseline and differential"/>
</dbReference>
<dbReference type="GO" id="GO:0005829">
    <property type="term" value="C:cytosol"/>
    <property type="evidence" value="ECO:0000314"/>
    <property type="project" value="RGD"/>
</dbReference>
<dbReference type="GO" id="GO:0099147">
    <property type="term" value="C:extrinsic component of postsynaptic density membrane"/>
    <property type="evidence" value="ECO:0000314"/>
    <property type="project" value="SynGO"/>
</dbReference>
<dbReference type="GO" id="GO:0098978">
    <property type="term" value="C:glutamatergic synapse"/>
    <property type="evidence" value="ECO:0000314"/>
    <property type="project" value="SynGO"/>
</dbReference>
<dbReference type="GO" id="GO:0043025">
    <property type="term" value="C:neuronal cell body"/>
    <property type="evidence" value="ECO:0000314"/>
    <property type="project" value="RGD"/>
</dbReference>
<dbReference type="GO" id="GO:0043204">
    <property type="term" value="C:perikaryon"/>
    <property type="evidence" value="ECO:0000314"/>
    <property type="project" value="RGD"/>
</dbReference>
<dbReference type="GO" id="GO:0045202">
    <property type="term" value="C:synapse"/>
    <property type="evidence" value="ECO:0000266"/>
    <property type="project" value="RGD"/>
</dbReference>
<dbReference type="GO" id="GO:0004118">
    <property type="term" value="F:3',5'-cGMP-stimulated cyclic-nucleotide phosphodiesterase activity"/>
    <property type="evidence" value="ECO:0000250"/>
    <property type="project" value="UniProtKB"/>
</dbReference>
<dbReference type="GO" id="GO:0004115">
    <property type="term" value="F:3',5'-cyclic-AMP phosphodiesterase activity"/>
    <property type="evidence" value="ECO:0000318"/>
    <property type="project" value="GO_Central"/>
</dbReference>
<dbReference type="GO" id="GO:0047555">
    <property type="term" value="F:3',5'-cyclic-GMP phosphodiesterase activity"/>
    <property type="evidence" value="ECO:0000318"/>
    <property type="project" value="GO_Central"/>
</dbReference>
<dbReference type="GO" id="GO:0004114">
    <property type="term" value="F:3',5'-cyclic-nucleotide phosphodiesterase activity"/>
    <property type="evidence" value="ECO:0000266"/>
    <property type="project" value="RGD"/>
</dbReference>
<dbReference type="GO" id="GO:0030552">
    <property type="term" value="F:cAMP binding"/>
    <property type="evidence" value="ECO:0000266"/>
    <property type="project" value="RGD"/>
</dbReference>
<dbReference type="GO" id="GO:0030553">
    <property type="term" value="F:cGMP binding"/>
    <property type="evidence" value="ECO:0007669"/>
    <property type="project" value="UniProtKB-KW"/>
</dbReference>
<dbReference type="GO" id="GO:0004112">
    <property type="term" value="F:cyclic-nucleotide phosphodiesterase activity"/>
    <property type="evidence" value="ECO:0000314"/>
    <property type="project" value="RGD"/>
</dbReference>
<dbReference type="GO" id="GO:0046872">
    <property type="term" value="F:metal ion binding"/>
    <property type="evidence" value="ECO:0007669"/>
    <property type="project" value="UniProtKB-KW"/>
</dbReference>
<dbReference type="GO" id="GO:0006198">
    <property type="term" value="P:cAMP catabolic process"/>
    <property type="evidence" value="ECO:0000314"/>
    <property type="project" value="RGD"/>
</dbReference>
<dbReference type="GO" id="GO:0019933">
    <property type="term" value="P:cAMP-mediated signaling"/>
    <property type="evidence" value="ECO:0000318"/>
    <property type="project" value="GO_Central"/>
</dbReference>
<dbReference type="GO" id="GO:0046069">
    <property type="term" value="P:cGMP catabolic process"/>
    <property type="evidence" value="ECO:0000314"/>
    <property type="project" value="RGD"/>
</dbReference>
<dbReference type="GO" id="GO:0010754">
    <property type="term" value="P:negative regulation of cGMP-mediated signaling"/>
    <property type="evidence" value="ECO:0000318"/>
    <property type="project" value="GO_Central"/>
</dbReference>
<dbReference type="GO" id="GO:0106070">
    <property type="term" value="P:regulation of adenylate cyclase-activating G protein-coupled receptor signaling pathway"/>
    <property type="evidence" value="ECO:0000266"/>
    <property type="project" value="RGD"/>
</dbReference>
<dbReference type="GO" id="GO:0141161">
    <property type="term" value="P:regulation of cAMP/PKA signal transduction"/>
    <property type="evidence" value="ECO:0000266"/>
    <property type="project" value="RGD"/>
</dbReference>
<dbReference type="CDD" id="cd00077">
    <property type="entry name" value="HDc"/>
    <property type="match status" value="1"/>
</dbReference>
<dbReference type="FunFam" id="3.30.450.40:FF:000005">
    <property type="entry name" value="Phosphodiesterase"/>
    <property type="match status" value="1"/>
</dbReference>
<dbReference type="FunFam" id="3.30.450.40:FF:000011">
    <property type="entry name" value="Phosphodiesterase"/>
    <property type="match status" value="1"/>
</dbReference>
<dbReference type="FunFam" id="1.10.1300.10:FF:000007">
    <property type="entry name" value="Phosphodiesterase 10A"/>
    <property type="match status" value="1"/>
</dbReference>
<dbReference type="Gene3D" id="3.30.450.40">
    <property type="match status" value="2"/>
</dbReference>
<dbReference type="Gene3D" id="1.10.1300.10">
    <property type="entry name" value="3'5'-cyclic nucleotide phosphodiesterase, catalytic domain"/>
    <property type="match status" value="1"/>
</dbReference>
<dbReference type="InterPro" id="IPR003018">
    <property type="entry name" value="GAF"/>
</dbReference>
<dbReference type="InterPro" id="IPR029016">
    <property type="entry name" value="GAF-like_dom_sf"/>
</dbReference>
<dbReference type="InterPro" id="IPR003607">
    <property type="entry name" value="HD/PDEase_dom"/>
</dbReference>
<dbReference type="InterPro" id="IPR023088">
    <property type="entry name" value="PDEase"/>
</dbReference>
<dbReference type="InterPro" id="IPR002073">
    <property type="entry name" value="PDEase_catalytic_dom"/>
</dbReference>
<dbReference type="InterPro" id="IPR036971">
    <property type="entry name" value="PDEase_catalytic_dom_sf"/>
</dbReference>
<dbReference type="InterPro" id="IPR023174">
    <property type="entry name" value="PDEase_CS"/>
</dbReference>
<dbReference type="PANTHER" id="PTHR11347">
    <property type="entry name" value="CYCLIC NUCLEOTIDE PHOSPHODIESTERASE"/>
    <property type="match status" value="1"/>
</dbReference>
<dbReference type="Pfam" id="PF01590">
    <property type="entry name" value="GAF"/>
    <property type="match status" value="2"/>
</dbReference>
<dbReference type="Pfam" id="PF00233">
    <property type="entry name" value="PDEase_I"/>
    <property type="match status" value="1"/>
</dbReference>
<dbReference type="PRINTS" id="PR00387">
    <property type="entry name" value="PDIESTERASE1"/>
</dbReference>
<dbReference type="SMART" id="SM00065">
    <property type="entry name" value="GAF"/>
    <property type="match status" value="2"/>
</dbReference>
<dbReference type="SMART" id="SM00471">
    <property type="entry name" value="HDc"/>
    <property type="match status" value="1"/>
</dbReference>
<dbReference type="SUPFAM" id="SSF55781">
    <property type="entry name" value="GAF domain-like"/>
    <property type="match status" value="2"/>
</dbReference>
<dbReference type="SUPFAM" id="SSF109604">
    <property type="entry name" value="HD-domain/PDEase-like"/>
    <property type="match status" value="1"/>
</dbReference>
<dbReference type="PROSITE" id="PS00126">
    <property type="entry name" value="PDEASE_I_1"/>
    <property type="match status" value="1"/>
</dbReference>
<dbReference type="PROSITE" id="PS51845">
    <property type="entry name" value="PDEASE_I_2"/>
    <property type="match status" value="1"/>
</dbReference>
<reference key="1">
    <citation type="journal article" date="1999" name="Eur. J. Biochem.">
        <title>Striatum- and testis-specific phosphodiesterase PDE10A isolation and characterization of a rat PDE10A.</title>
        <authorList>
            <person name="Fujishige K."/>
            <person name="Kotera J."/>
            <person name="Omori K."/>
        </authorList>
    </citation>
    <scope>NUCLEOTIDE SEQUENCE [MRNA] (ISOFORMS 1 AND 2)</scope>
    <scope>ALTERNATIVE SPLICING</scope>
    <scope>FUNCTION</scope>
    <scope>SUBCELLULAR LOCATION</scope>
    <scope>BIOPHYSICOCHEMICAL PROPERTIES</scope>
    <scope>ACTIVITY REGULATION</scope>
    <scope>TISSUE SPECIFICITY</scope>
    <source>
        <strain>Sprague-Dawley</strain>
        <tissue>Brain</tissue>
    </source>
</reference>
<reference key="2">
    <citation type="journal article" date="2004" name="J. Biol. Chem.">
        <title>Differential amplification of intron-containing transcripts reveals long term potentiation-associated up-regulation of specific Pde10A phosphodiesterase splice variants.</title>
        <authorList>
            <person name="O'Connor V."/>
            <person name="Genin A."/>
            <person name="Davis S."/>
            <person name="Karishma K.K."/>
            <person name="Doyere V."/>
            <person name="De Zeeuw C.I."/>
            <person name="Sanger G."/>
            <person name="Hunt S.P."/>
            <person name="Richter-Levin G."/>
            <person name="Mallet J."/>
            <person name="Laroche S."/>
            <person name="Bliss T.V.P."/>
            <person name="French P.J."/>
        </authorList>
    </citation>
    <scope>NUCLEOTIDE SEQUENCE [MRNA] (ISOFORMS 2; 3; 4; 5 AND 6)</scope>
    <scope>TISSUE SPECIFICITY</scope>
    <scope>CATALYTIC ACTIVITY</scope>
    <scope>INDUCTION</scope>
    <source>
        <strain>Wistar</strain>
    </source>
</reference>
<reference key="3">
    <citation type="submission" date="2005-07" db="EMBL/GenBank/DDBJ databases">
        <authorList>
            <person name="Mural R.J."/>
            <person name="Adams M.D."/>
            <person name="Myers E.W."/>
            <person name="Smith H.O."/>
            <person name="Venter J.C."/>
        </authorList>
    </citation>
    <scope>NUCLEOTIDE SEQUENCE [LARGE SCALE GENOMIC DNA]</scope>
</reference>
<reference key="4">
    <citation type="journal article" date="2007" name="J. Med. Chem.">
        <title>Discovery of a series of 6,7-dimethoxy-4-pyrrolidylquinazoline PDE10A inhibitors.</title>
        <authorList>
            <person name="Chappie T.A."/>
            <person name="Humphrey J.M."/>
            <person name="Allen M.P."/>
            <person name="Estep K.G."/>
            <person name="Fox C.B."/>
            <person name="Lebel L.A."/>
            <person name="Liras S."/>
            <person name="Marr E.S."/>
            <person name="Menniti F.S."/>
            <person name="Pandit J."/>
            <person name="Schmidt C.J."/>
            <person name="Tu M."/>
            <person name="Williams R.D."/>
            <person name="Yang F.V."/>
        </authorList>
    </citation>
    <scope>X-RAY CRYSTALLOGRAPHY (1.8 ANGSTROMS) OF 452-794 IN COMPLEXES WITH ZINC; MAGNESIUM AND A SYNTHETIC INHIBITOR</scope>
    <scope>COFACTOR</scope>
</reference>
<sequence>MEDGPSNNASCFRRLTECFLSPSLTDEKVKAYLSLHPQVLDEFVSESVSAETVEKWLKRKNNKAEDEPSPKEVSRYQDTNMQGVVYELNSYIEQRLDTGGDNHLLLYELSSIIRIATKADGFALYFLGECNNSLCVFTPPGMKEGQPRLIPAGPITQGTTISAYVAKSRKTLLVEDILGDERFPRGTGLESGTRIQSVLCLPIVTAIGDLIGILELYRHWGKEAFCLSHQEVATANLAWASVAIHQVQVCRGLAKQTELNDFLLDVSKTYFDNIVAIDSLLEHIMIYAKNLVNADRCALFQVDHKNKELYSDLFDIGEEKEGKPVFKKTKEIRFSIEKGIAGQVARTGEVLNIPDAYADPRFNREVDLYTGYTTRNILCMPIVSRGSVIGVVQMVNKISGSAFSKTDENNFKMFAVFCALALHCANMYHRIRHSECIYRVTMEKLSYHSICTSEEWQGLMHFNLPARICRDIELFHFDIGPFENMWPGIFVYMIHRSCGTSCFELEKLCRFIMSVKKNYRRVPYHNWKHAVTVAHCMYAILQNNNGLFTDLERKGLLIACLCHDLDHRGFSNSYLQKFDHPLAALYSTSTMEQHHFSQTVSILQLEGHNIFSTLSSSEYEQVLEIIRKAIIATDLALYFGNRKQLEEMYQTGSLNLHNQSHRDRVIGLMMTACDLCSVTKLWPVTKLTANDIYAEFWAEGDEMKKLGIQPIPMMDRDKRDEVPQGQLGFYNAVAIPCYTTLTQILPPTEPLLKACRDNLNQWEKVIRGEETAMWISGPATSKSTSEKPTRKVDD</sequence>
<organism>
    <name type="scientific">Rattus norvegicus</name>
    <name type="common">Rat</name>
    <dbReference type="NCBI Taxonomy" id="10116"/>
    <lineage>
        <taxon>Eukaryota</taxon>
        <taxon>Metazoa</taxon>
        <taxon>Chordata</taxon>
        <taxon>Craniata</taxon>
        <taxon>Vertebrata</taxon>
        <taxon>Euteleostomi</taxon>
        <taxon>Mammalia</taxon>
        <taxon>Eutheria</taxon>
        <taxon>Euarchontoglires</taxon>
        <taxon>Glires</taxon>
        <taxon>Rodentia</taxon>
        <taxon>Myomorpha</taxon>
        <taxon>Muroidea</taxon>
        <taxon>Muridae</taxon>
        <taxon>Murinae</taxon>
        <taxon>Rattus</taxon>
    </lineage>
</organism>
<name>PDE10_RAT</name>
<protein>
    <recommendedName>
        <fullName>cAMP and cAMP-inhibited cGMP 3',5'-cyclic phosphodiesterase 10A</fullName>
        <ecNumber evidence="4 5">3.1.4.17</ecNumber>
    </recommendedName>
</protein>
<proteinExistence type="evidence at protein level"/>
<keyword id="KW-0002">3D-structure</keyword>
<keyword id="KW-0021">Allosteric enzyme</keyword>
<keyword id="KW-0025">Alternative splicing</keyword>
<keyword id="KW-0114">cAMP</keyword>
<keyword id="KW-0116">cAMP-binding</keyword>
<keyword id="KW-0140">cGMP</keyword>
<keyword id="KW-0142">cGMP-binding</keyword>
<keyword id="KW-0963">Cytoplasm</keyword>
<keyword id="KW-0378">Hydrolase</keyword>
<keyword id="KW-0479">Metal-binding</keyword>
<keyword id="KW-0547">Nucleotide-binding</keyword>
<keyword id="KW-1185">Reference proteome</keyword>
<keyword id="KW-0677">Repeat</keyword>
<comment type="function">
    <text evidence="4">Plays a role in signal transduction by regulating the intracellular concentration of cyclic nucleotides. Can hydrolyze both cAMP and cGMP, but has higher affinity for cAMP and is more efficient with cAMP as substrate.</text>
</comment>
<comment type="catalytic activity">
    <reaction evidence="4 5">
        <text>a nucleoside 3',5'-cyclic phosphate + H2O = a nucleoside 5'-phosphate + H(+)</text>
        <dbReference type="Rhea" id="RHEA:14653"/>
        <dbReference type="ChEBI" id="CHEBI:15377"/>
        <dbReference type="ChEBI" id="CHEBI:15378"/>
        <dbReference type="ChEBI" id="CHEBI:57867"/>
        <dbReference type="ChEBI" id="CHEBI:58464"/>
        <dbReference type="EC" id="3.1.4.17"/>
    </reaction>
</comment>
<comment type="catalytic activity">
    <reaction evidence="4">
        <text>3',5'-cyclic AMP + H2O = AMP + H(+)</text>
        <dbReference type="Rhea" id="RHEA:25277"/>
        <dbReference type="ChEBI" id="CHEBI:15377"/>
        <dbReference type="ChEBI" id="CHEBI:15378"/>
        <dbReference type="ChEBI" id="CHEBI:58165"/>
        <dbReference type="ChEBI" id="CHEBI:456215"/>
    </reaction>
</comment>
<comment type="catalytic activity">
    <reaction evidence="4 5">
        <text>3',5'-cyclic GMP + H2O = GMP + H(+)</text>
        <dbReference type="Rhea" id="RHEA:16957"/>
        <dbReference type="ChEBI" id="CHEBI:15377"/>
        <dbReference type="ChEBI" id="CHEBI:15378"/>
        <dbReference type="ChEBI" id="CHEBI:57746"/>
        <dbReference type="ChEBI" id="CHEBI:58115"/>
    </reaction>
</comment>
<comment type="cofactor">
    <cofactor evidence="6">
        <name>a divalent metal cation</name>
        <dbReference type="ChEBI" id="CHEBI:60240"/>
    </cofactor>
    <text evidence="6">Binds 2 divalent metal cations per subunit. Site 1 may preferentially bind zinc ions, while site 2 has a preference for magnesium and/or manganese ions.</text>
</comment>
<comment type="activity regulation">
    <text evidence="4">Inhibited by dipyridamole and moderately by IBMX, zaprinast and rolipram.</text>
</comment>
<comment type="biophysicochemical properties">
    <kinetics>
        <KM evidence="4">0.26 uM for cAMP</KM>
        <KM evidence="4">9.3 uM for cGMP</KM>
    </kinetics>
</comment>
<comment type="pathway">
    <text evidence="4 5">Purine metabolism; 3',5'-cyclic AMP degradation; AMP from 3',5'-cyclic AMP: step 1/1.</text>
</comment>
<comment type="pathway">
    <text evidence="4 5">Purine metabolism; 3',5'-cyclic GMP degradation; GMP from 3',5'-cyclic GMP: step 1/1.</text>
</comment>
<comment type="subunit">
    <text evidence="2">Homodimer.</text>
</comment>
<comment type="subcellular location">
    <subcellularLocation>
        <location evidence="4">Cytoplasm</location>
        <location evidence="4">Cytosol</location>
    </subcellularLocation>
</comment>
<comment type="alternative products">
    <event type="alternative splicing"/>
    <isoform>
        <id>Q9QYJ6-1</id>
        <name>1</name>
        <name evidence="8">PDE10A2</name>
        <sequence type="displayed"/>
    </isoform>
    <isoform>
        <id>Q9QYJ6-2</id>
        <name>2</name>
        <name evidence="8">PDE10A3</name>
        <sequence type="described" ref="VSP_035921"/>
    </isoform>
    <isoform>
        <id>Q9QYJ6-3</id>
        <name>3</name>
        <name evidence="8">PDE10A11</name>
        <sequence type="described" ref="VSP_035922"/>
    </isoform>
    <isoform>
        <id>Q9QYJ6-4</id>
        <name>4</name>
        <name evidence="8">PDE10A12</name>
        <sequence type="described" ref="VSP_035923"/>
    </isoform>
    <isoform>
        <id>Q9QYJ6-5</id>
        <name>5</name>
        <name evidence="8">PDE10A13</name>
        <sequence type="described" ref="VSP_035920"/>
    </isoform>
    <isoform>
        <id>Q9QYJ6-6</id>
        <name>6</name>
        <name evidence="8">PDE10A14</name>
        <sequence type="described" ref="VSP_035919"/>
    </isoform>
</comment>
<comment type="tissue specificity">
    <text evidence="4 5">Detected in striatum and testis (at protein level). Detected in whole brain, hippocampus, olfactory bulb, striatum neurons and testis.</text>
</comment>
<comment type="induction">
    <text evidence="5">Up-regulated in brain after seizures. Up-regulated in the hippocampus one hour after induction of long-term potentiation.</text>
</comment>
<comment type="domain">
    <text evidence="2">The tandem GAF domains bind cAMP, and regulate enzyme activity. The binding of cAMP stimulates enzyme activity.</text>
</comment>
<comment type="domain">
    <text evidence="2">Composed of a C-terminal catalytic domain containing two divalent metal sites and an N-terminal regulatory domain which contains one cyclic nucleotide-binding region.</text>
</comment>
<comment type="similarity">
    <text evidence="9">Belongs to the cyclic nucleotide phosphodiesterase family.</text>
</comment>
<feature type="chain" id="PRO_0000355559" description="cAMP and cAMP-inhibited cGMP 3',5'-cyclic phosphodiesterase 10A">
    <location>
        <begin position="1"/>
        <end position="794"/>
    </location>
</feature>
<feature type="domain" description="PDEase" evidence="3">
    <location>
        <begin position="452"/>
        <end position="769"/>
    </location>
</feature>
<feature type="active site" description="Proton donor" evidence="1">
    <location>
        <position position="525"/>
    </location>
</feature>
<feature type="binding site" evidence="2">
    <location>
        <begin position="296"/>
        <end position="297"/>
    </location>
    <ligand>
        <name>3',5'-cyclic AMP</name>
        <dbReference type="ChEBI" id="CHEBI:58165"/>
    </ligand>
</feature>
<feature type="binding site" evidence="2">
    <location>
        <begin position="340"/>
        <end position="341"/>
    </location>
    <ligand>
        <name>3',5'-cyclic AMP</name>
        <dbReference type="ChEBI" id="CHEBI:58165"/>
    </ligand>
</feature>
<feature type="binding site" evidence="2">
    <location>
        <position position="374"/>
    </location>
    <ligand>
        <name>3',5'-cyclic AMP</name>
        <dbReference type="ChEBI" id="CHEBI:58165"/>
    </ligand>
</feature>
<feature type="binding site" evidence="2">
    <location>
        <position position="393"/>
    </location>
    <ligand>
        <name>3',5'-cyclic AMP</name>
        <dbReference type="ChEBI" id="CHEBI:58165"/>
    </ligand>
</feature>
<feature type="binding site" evidence="2">
    <location>
        <position position="525"/>
    </location>
    <ligand>
        <name>3',5'-cyclic AMP</name>
        <dbReference type="ChEBI" id="CHEBI:58165"/>
    </ligand>
</feature>
<feature type="binding site" evidence="2">
    <location>
        <position position="525"/>
    </location>
    <ligand>
        <name>3',5'-cyclic GMP</name>
        <dbReference type="ChEBI" id="CHEBI:57746"/>
    </ligand>
</feature>
<feature type="binding site" evidence="6">
    <location>
        <position position="529"/>
    </location>
    <ligand>
        <name>a divalent metal cation</name>
        <dbReference type="ChEBI" id="CHEBI:60240"/>
        <label>1</label>
    </ligand>
</feature>
<feature type="binding site" evidence="6">
    <location>
        <position position="563"/>
    </location>
    <ligand>
        <name>a divalent metal cation</name>
        <dbReference type="ChEBI" id="CHEBI:60240"/>
        <label>1</label>
    </ligand>
</feature>
<feature type="binding site" evidence="6">
    <location>
        <position position="564"/>
    </location>
    <ligand>
        <name>a divalent metal cation</name>
        <dbReference type="ChEBI" id="CHEBI:60240"/>
        <label>1</label>
    </ligand>
</feature>
<feature type="binding site" evidence="6">
    <location>
        <position position="564"/>
    </location>
    <ligand>
        <name>a divalent metal cation</name>
        <dbReference type="ChEBI" id="CHEBI:60240"/>
        <label>2</label>
    </ligand>
</feature>
<feature type="binding site" evidence="6">
    <location>
        <position position="674"/>
    </location>
    <ligand>
        <name>a divalent metal cation</name>
        <dbReference type="ChEBI" id="CHEBI:60240"/>
        <label>1</label>
    </ligand>
</feature>
<feature type="binding site" evidence="2">
    <location>
        <position position="726"/>
    </location>
    <ligand>
        <name>3',5'-cyclic AMP</name>
        <dbReference type="ChEBI" id="CHEBI:58165"/>
    </ligand>
</feature>
<feature type="binding site" evidence="2">
    <location>
        <position position="726"/>
    </location>
    <ligand>
        <name>3',5'-cyclic GMP</name>
        <dbReference type="ChEBI" id="CHEBI:57746"/>
    </ligand>
</feature>
<feature type="splice variant" id="VSP_035919" description="In isoform 6." evidence="8">
    <location>
        <begin position="1"/>
        <end position="141"/>
    </location>
</feature>
<feature type="splice variant" id="VSP_035920" description="In isoform 5." evidence="8">
    <location>
        <begin position="1"/>
        <end position="80"/>
    </location>
</feature>
<feature type="splice variant" id="VSP_035921" description="In isoform 2." evidence="7 8">
    <original>MEDGPSNNASCFRRLTECFLSPS</original>
    <variation>MSNDSPEGAVGSCNATG</variation>
    <location>
        <begin position="1"/>
        <end position="23"/>
    </location>
</feature>
<feature type="splice variant" id="VSP_035922" description="In isoform 3." evidence="8">
    <original>MEDGPSNNASCFRRLTECFLSPS</original>
    <variation>MSKKRKALEGGGGGGEPQLPEEEPTAWFGGSSEEPAGCLPITFKGGSKGPALLALRNRTDSRGQMSNDSPEGAVGSCNATG</variation>
    <location>
        <begin position="1"/>
        <end position="23"/>
    </location>
</feature>
<feature type="splice variant" id="VSP_035923" description="In isoform 4." evidence="8">
    <original>MEDGPSNNASCFRRLTECFLSPS</original>
    <variation>MSKKRKALEGGGGGGEPQLPEEEPTAWFGGSSEEPAGCLPITFKGGSKGPALLALRNRTDSRGQMSNDSPEGAVGSCNATGSTGSTGELGKEFHTPPRRKSASDSRLALCMG</variation>
    <location>
        <begin position="1"/>
        <end position="23"/>
    </location>
</feature>
<feature type="helix" evidence="11">
    <location>
        <begin position="466"/>
        <end position="471"/>
    </location>
</feature>
<feature type="helix" evidence="11">
    <location>
        <begin position="483"/>
        <end position="485"/>
    </location>
</feature>
<feature type="helix" evidence="11">
    <location>
        <begin position="486"/>
        <end position="498"/>
    </location>
</feature>
<feature type="helix" evidence="10">
    <location>
        <begin position="500"/>
        <end position="502"/>
    </location>
</feature>
<feature type="helix" evidence="11">
    <location>
        <begin position="505"/>
        <end position="517"/>
    </location>
</feature>
<feature type="strand" evidence="11">
    <location>
        <begin position="523"/>
        <end position="526"/>
    </location>
</feature>
<feature type="helix" evidence="11">
    <location>
        <begin position="527"/>
        <end position="542"/>
    </location>
</feature>
<feature type="turn" evidence="11">
    <location>
        <begin position="545"/>
        <end position="547"/>
    </location>
</feature>
<feature type="helix" evidence="11">
    <location>
        <begin position="550"/>
        <end position="562"/>
    </location>
</feature>
<feature type="turn" evidence="11">
    <location>
        <begin position="563"/>
        <end position="566"/>
    </location>
</feature>
<feature type="helix" evidence="11">
    <location>
        <begin position="572"/>
        <end position="578"/>
    </location>
</feature>
<feature type="helix" evidence="11">
    <location>
        <begin position="581"/>
        <end position="585"/>
    </location>
</feature>
<feature type="strand" evidence="11">
    <location>
        <begin position="587"/>
        <end position="589"/>
    </location>
</feature>
<feature type="helix" evidence="11">
    <location>
        <begin position="590"/>
        <end position="603"/>
    </location>
</feature>
<feature type="turn" evidence="11">
    <location>
        <begin position="610"/>
        <end position="613"/>
    </location>
</feature>
<feature type="helix" evidence="11">
    <location>
        <begin position="616"/>
        <end position="632"/>
    </location>
</feature>
<feature type="helix" evidence="11">
    <location>
        <begin position="635"/>
        <end position="650"/>
    </location>
</feature>
<feature type="helix" evidence="11">
    <location>
        <begin position="659"/>
        <end position="674"/>
    </location>
</feature>
<feature type="helix" evidence="11">
    <location>
        <begin position="676"/>
        <end position="679"/>
    </location>
</feature>
<feature type="helix" evidence="11">
    <location>
        <begin position="682"/>
        <end position="705"/>
    </location>
</feature>
<feature type="helix" evidence="11">
    <location>
        <begin position="712"/>
        <end position="714"/>
    </location>
</feature>
<feature type="helix" evidence="11">
    <location>
        <begin position="716"/>
        <end position="721"/>
    </location>
</feature>
<feature type="helix" evidence="11">
    <location>
        <begin position="722"/>
        <end position="732"/>
    </location>
</feature>
<feature type="helix" evidence="11">
    <location>
        <begin position="734"/>
        <end position="744"/>
    </location>
</feature>
<feature type="helix" evidence="11">
    <location>
        <begin position="746"/>
        <end position="748"/>
    </location>
</feature>
<feature type="helix" evidence="11">
    <location>
        <begin position="749"/>
        <end position="766"/>
    </location>
</feature>